<reference key="1">
    <citation type="journal article" date="1996" name="Plant Mol. Biol.">
        <title>Isolation of cDNAs encoding two purine biosynthetic enzymes of soybean and expression of the corresponding transcripts in roots and root nodules.</title>
        <authorList>
            <person name="Schnorr K.M."/>
            <person name="Laloue M."/>
            <person name="Hirel B."/>
        </authorList>
    </citation>
    <scope>NUCLEOTIDE SEQUENCE [MRNA]</scope>
    <source>
        <tissue>Root nodule</tissue>
    </source>
</reference>
<gene>
    <name type="primary">PUR3</name>
    <name type="synonym">PURN</name>
</gene>
<evidence type="ECO:0000250" key="1"/>
<evidence type="ECO:0000255" key="2"/>
<evidence type="ECO:0000305" key="3"/>
<feature type="transit peptide" description="Chloroplast" evidence="2">
    <location>
        <begin position="1"/>
        <end position="62"/>
    </location>
</feature>
<feature type="chain" id="PRO_0000029877" description="Phosphoribosylglycinamide formyltransferase, chloroplastic">
    <location>
        <begin position="63"/>
        <end position="295"/>
    </location>
</feature>
<feature type="active site" description="Proton donor" evidence="1">
    <location>
        <position position="188"/>
    </location>
</feature>
<feature type="binding site" evidence="1">
    <location>
        <begin position="96"/>
        <end position="98"/>
    </location>
    <ligand>
        <name>N(1)-(5-phospho-beta-D-ribosyl)glycinamide</name>
        <dbReference type="ChEBI" id="CHEBI:143788"/>
    </ligand>
</feature>
<feature type="binding site" evidence="1">
    <location>
        <begin position="171"/>
        <end position="174"/>
    </location>
    <ligand>
        <name>(6R)-10-formyltetrahydrofolate</name>
        <dbReference type="ChEBI" id="CHEBI:195366"/>
    </ligand>
</feature>
<feature type="binding site" evidence="1">
    <location>
        <position position="230"/>
    </location>
    <ligand>
        <name>(6R)-10-formyltetrahydrofolate</name>
        <dbReference type="ChEBI" id="CHEBI:195366"/>
    </ligand>
</feature>
<feature type="binding site" evidence="1">
    <location>
        <position position="259"/>
    </location>
    <ligand>
        <name>N(1)-(5-phospho-beta-D-ribosyl)glycinamide</name>
        <dbReference type="ChEBI" id="CHEBI:143788"/>
    </ligand>
</feature>
<feature type="site" description="Raises pKa of active site His" evidence="1">
    <location>
        <position position="230"/>
    </location>
</feature>
<accession>Q42805</accession>
<proteinExistence type="evidence at transcript level"/>
<keyword id="KW-0150">Chloroplast</keyword>
<keyword id="KW-0934">Plastid</keyword>
<keyword id="KW-0658">Purine biosynthesis</keyword>
<keyword id="KW-1185">Reference proteome</keyword>
<keyword id="KW-0808">Transferase</keyword>
<keyword id="KW-0809">Transit peptide</keyword>
<name>PUR3_SOYBN</name>
<protein>
    <recommendedName>
        <fullName>Phosphoribosylglycinamide formyltransferase, chloroplastic</fullName>
        <ecNumber>2.1.2.2</ecNumber>
    </recommendedName>
    <alternativeName>
        <fullName>5'-phosphoribosylglycinamide transformylase</fullName>
    </alternativeName>
    <alternativeName>
        <fullName>GAR transformylase</fullName>
        <shortName>GART</shortName>
    </alternativeName>
    <alternativeName>
        <fullName>GMpurN</fullName>
    </alternativeName>
</protein>
<comment type="catalytic activity">
    <reaction>
        <text>N(1)-(5-phospho-beta-D-ribosyl)glycinamide + (6R)-10-formyltetrahydrofolate = N(2)-formyl-N(1)-(5-phospho-beta-D-ribosyl)glycinamide + (6S)-5,6,7,8-tetrahydrofolate + H(+)</text>
        <dbReference type="Rhea" id="RHEA:15053"/>
        <dbReference type="ChEBI" id="CHEBI:15378"/>
        <dbReference type="ChEBI" id="CHEBI:57453"/>
        <dbReference type="ChEBI" id="CHEBI:143788"/>
        <dbReference type="ChEBI" id="CHEBI:147286"/>
        <dbReference type="ChEBI" id="CHEBI:195366"/>
        <dbReference type="EC" id="2.1.2.2"/>
    </reaction>
</comment>
<comment type="pathway">
    <text>Purine metabolism; IMP biosynthesis via de novo pathway; N(2)-formyl-N(1)-(5-phospho-D-ribosyl)glycinamide from N(1)-(5-phospho-D-ribosyl)glycinamide (10-formyl THF route): step 1/1.</text>
</comment>
<comment type="subcellular location">
    <subcellularLocation>
        <location>Plastid</location>
        <location>Chloroplast</location>
    </subcellularLocation>
</comment>
<comment type="tissue specificity">
    <text>Highly expressed in young and mature nodules but weakly expressed in roots and leaves.</text>
</comment>
<comment type="similarity">
    <text evidence="3">Belongs to the GART family.</text>
</comment>
<organism>
    <name type="scientific">Glycine max</name>
    <name type="common">Soybean</name>
    <name type="synonym">Glycine hispida</name>
    <dbReference type="NCBI Taxonomy" id="3847"/>
    <lineage>
        <taxon>Eukaryota</taxon>
        <taxon>Viridiplantae</taxon>
        <taxon>Streptophyta</taxon>
        <taxon>Embryophyta</taxon>
        <taxon>Tracheophyta</taxon>
        <taxon>Spermatophyta</taxon>
        <taxon>Magnoliopsida</taxon>
        <taxon>eudicotyledons</taxon>
        <taxon>Gunneridae</taxon>
        <taxon>Pentapetalae</taxon>
        <taxon>rosids</taxon>
        <taxon>fabids</taxon>
        <taxon>Fabales</taxon>
        <taxon>Fabaceae</taxon>
        <taxon>Papilionoideae</taxon>
        <taxon>50 kb inversion clade</taxon>
        <taxon>NPAAA clade</taxon>
        <taxon>indigoferoid/millettioid clade</taxon>
        <taxon>Phaseoleae</taxon>
        <taxon>Glycine</taxon>
        <taxon>Glycine subgen. Soja</taxon>
    </lineage>
</organism>
<dbReference type="EC" id="2.1.2.2"/>
<dbReference type="EMBL" id="X96865">
    <property type="protein sequence ID" value="CAA65608.1"/>
    <property type="molecule type" value="mRNA"/>
</dbReference>
<dbReference type="PIR" id="T07781">
    <property type="entry name" value="T07781"/>
</dbReference>
<dbReference type="SMR" id="Q42805"/>
<dbReference type="FunCoup" id="Q42805">
    <property type="interactions" value="882"/>
</dbReference>
<dbReference type="STRING" id="3847.Q42805"/>
<dbReference type="InParanoid" id="Q42805"/>
<dbReference type="UniPathway" id="UPA00074">
    <property type="reaction ID" value="UER00126"/>
</dbReference>
<dbReference type="Proteomes" id="UP000008827">
    <property type="component" value="Unplaced"/>
</dbReference>
<dbReference type="GO" id="GO:0009507">
    <property type="term" value="C:chloroplast"/>
    <property type="evidence" value="ECO:0007669"/>
    <property type="project" value="UniProtKB-SubCell"/>
</dbReference>
<dbReference type="GO" id="GO:0005737">
    <property type="term" value="C:cytoplasm"/>
    <property type="evidence" value="ECO:0000318"/>
    <property type="project" value="GO_Central"/>
</dbReference>
<dbReference type="GO" id="GO:0004644">
    <property type="term" value="F:phosphoribosylglycinamide formyltransferase activity"/>
    <property type="evidence" value="ECO:0000318"/>
    <property type="project" value="GO_Central"/>
</dbReference>
<dbReference type="GO" id="GO:0006189">
    <property type="term" value="P:'de novo' IMP biosynthetic process"/>
    <property type="evidence" value="ECO:0000318"/>
    <property type="project" value="GO_Central"/>
</dbReference>
<dbReference type="Gene3D" id="3.40.50.170">
    <property type="entry name" value="Formyl transferase, N-terminal domain"/>
    <property type="match status" value="1"/>
</dbReference>
<dbReference type="InterPro" id="IPR002376">
    <property type="entry name" value="Formyl_transf_N"/>
</dbReference>
<dbReference type="InterPro" id="IPR036477">
    <property type="entry name" value="Formyl_transf_N_sf"/>
</dbReference>
<dbReference type="InterPro" id="IPR001555">
    <property type="entry name" value="GART_AS"/>
</dbReference>
<dbReference type="PANTHER" id="PTHR43369">
    <property type="entry name" value="PHOSPHORIBOSYLGLYCINAMIDE FORMYLTRANSFERASE"/>
    <property type="match status" value="1"/>
</dbReference>
<dbReference type="PANTHER" id="PTHR43369:SF2">
    <property type="entry name" value="PHOSPHORIBOSYLGLYCINAMIDE FORMYLTRANSFERASE"/>
    <property type="match status" value="1"/>
</dbReference>
<dbReference type="Pfam" id="PF00551">
    <property type="entry name" value="Formyl_trans_N"/>
    <property type="match status" value="1"/>
</dbReference>
<dbReference type="PIRSF" id="PIRSF036480">
    <property type="entry name" value="FormyFH4_hydr"/>
    <property type="match status" value="1"/>
</dbReference>
<dbReference type="SUPFAM" id="SSF53328">
    <property type="entry name" value="Formyltransferase"/>
    <property type="match status" value="1"/>
</dbReference>
<dbReference type="PROSITE" id="PS00373">
    <property type="entry name" value="GART"/>
    <property type="match status" value="1"/>
</dbReference>
<sequence>MSVPSIPIVKQQFSPKFPRLPSSSLYPSSQSQNLNVPSGAFHPISIVHKEVCSSSCKRIWCSSSSSSTAEPKEGHEVRAQVTVRRKKLGVFVSGGGTNFRAIHEATKRGSLHGDVLVLVTNKSDCGGAEYARNNGIPVILYHISKDESNGSDLVDTLRKFEVDFILLAGYLNLYQWNDPSLQKIYIQHSSITSSSFWRQGIHGMKVHKAVIASGARFSGPTIHFVDEHYDTGRILAQRVVPVQANDTVEELAARVLKEEHQLYVEVVEALCEERVVWRQDGVPLIQSKENPNEFR</sequence>